<evidence type="ECO:0000255" key="1">
    <source>
        <dbReference type="HAMAP-Rule" id="MF_00418"/>
    </source>
</evidence>
<evidence type="ECO:0000305" key="2"/>
<name>DAPA_STRZT</name>
<keyword id="KW-0028">Amino-acid biosynthesis</keyword>
<keyword id="KW-0963">Cytoplasm</keyword>
<keyword id="KW-0220">Diaminopimelate biosynthesis</keyword>
<keyword id="KW-0456">Lyase</keyword>
<keyword id="KW-0457">Lysine biosynthesis</keyword>
<keyword id="KW-0704">Schiff base</keyword>
<dbReference type="EC" id="4.3.3.7" evidence="1"/>
<dbReference type="EMBL" id="CP000921">
    <property type="protein sequence ID" value="ACO23523.1"/>
    <property type="molecule type" value="Genomic_DNA"/>
</dbReference>
<dbReference type="RefSeq" id="WP_000121626.1">
    <property type="nucleotide sequence ID" value="NC_012469.1"/>
</dbReference>
<dbReference type="SMR" id="C1CRD6"/>
<dbReference type="KEGG" id="snt:SPT_1068"/>
<dbReference type="HOGENOM" id="CLU_049343_7_1_9"/>
<dbReference type="UniPathway" id="UPA00034">
    <property type="reaction ID" value="UER00017"/>
</dbReference>
<dbReference type="GO" id="GO:0005829">
    <property type="term" value="C:cytosol"/>
    <property type="evidence" value="ECO:0007669"/>
    <property type="project" value="TreeGrafter"/>
</dbReference>
<dbReference type="GO" id="GO:0008840">
    <property type="term" value="F:4-hydroxy-tetrahydrodipicolinate synthase activity"/>
    <property type="evidence" value="ECO:0007669"/>
    <property type="project" value="UniProtKB-UniRule"/>
</dbReference>
<dbReference type="GO" id="GO:0019877">
    <property type="term" value="P:diaminopimelate biosynthetic process"/>
    <property type="evidence" value="ECO:0007669"/>
    <property type="project" value="UniProtKB-UniRule"/>
</dbReference>
<dbReference type="GO" id="GO:0009089">
    <property type="term" value="P:lysine biosynthetic process via diaminopimelate"/>
    <property type="evidence" value="ECO:0007669"/>
    <property type="project" value="UniProtKB-UniRule"/>
</dbReference>
<dbReference type="CDD" id="cd00950">
    <property type="entry name" value="DHDPS"/>
    <property type="match status" value="1"/>
</dbReference>
<dbReference type="Gene3D" id="3.20.20.70">
    <property type="entry name" value="Aldolase class I"/>
    <property type="match status" value="1"/>
</dbReference>
<dbReference type="HAMAP" id="MF_00418">
    <property type="entry name" value="DapA"/>
    <property type="match status" value="1"/>
</dbReference>
<dbReference type="InterPro" id="IPR013785">
    <property type="entry name" value="Aldolase_TIM"/>
</dbReference>
<dbReference type="InterPro" id="IPR005263">
    <property type="entry name" value="DapA"/>
</dbReference>
<dbReference type="InterPro" id="IPR002220">
    <property type="entry name" value="DapA-like"/>
</dbReference>
<dbReference type="InterPro" id="IPR020625">
    <property type="entry name" value="Schiff_base-form_aldolases_AS"/>
</dbReference>
<dbReference type="NCBIfam" id="TIGR00674">
    <property type="entry name" value="dapA"/>
    <property type="match status" value="1"/>
</dbReference>
<dbReference type="PANTHER" id="PTHR12128:SF66">
    <property type="entry name" value="4-HYDROXY-2-OXOGLUTARATE ALDOLASE, MITOCHONDRIAL"/>
    <property type="match status" value="1"/>
</dbReference>
<dbReference type="PANTHER" id="PTHR12128">
    <property type="entry name" value="DIHYDRODIPICOLINATE SYNTHASE"/>
    <property type="match status" value="1"/>
</dbReference>
<dbReference type="Pfam" id="PF00701">
    <property type="entry name" value="DHDPS"/>
    <property type="match status" value="1"/>
</dbReference>
<dbReference type="PIRSF" id="PIRSF001365">
    <property type="entry name" value="DHDPS"/>
    <property type="match status" value="1"/>
</dbReference>
<dbReference type="PRINTS" id="PR00146">
    <property type="entry name" value="DHPICSNTHASE"/>
</dbReference>
<dbReference type="SMART" id="SM01130">
    <property type="entry name" value="DHDPS"/>
    <property type="match status" value="1"/>
</dbReference>
<dbReference type="SUPFAM" id="SSF51569">
    <property type="entry name" value="Aldolase"/>
    <property type="match status" value="1"/>
</dbReference>
<dbReference type="PROSITE" id="PS00666">
    <property type="entry name" value="DHDPS_2"/>
    <property type="match status" value="1"/>
</dbReference>
<organism>
    <name type="scientific">Streptococcus pneumoniae (strain Taiwan19F-14)</name>
    <dbReference type="NCBI Taxonomy" id="487213"/>
    <lineage>
        <taxon>Bacteria</taxon>
        <taxon>Bacillati</taxon>
        <taxon>Bacillota</taxon>
        <taxon>Bacilli</taxon>
        <taxon>Lactobacillales</taxon>
        <taxon>Streptococcaceae</taxon>
        <taxon>Streptococcus</taxon>
    </lineage>
</organism>
<accession>C1CRD6</accession>
<proteinExistence type="inferred from homology"/>
<feature type="chain" id="PRO_1000134883" description="4-hydroxy-tetrahydrodipicolinate synthase">
    <location>
        <begin position="1"/>
        <end position="311"/>
    </location>
</feature>
<feature type="active site" description="Proton donor/acceptor" evidence="1">
    <location>
        <position position="140"/>
    </location>
</feature>
<feature type="active site" description="Schiff-base intermediate with substrate" evidence="1">
    <location>
        <position position="168"/>
    </location>
</feature>
<feature type="binding site" evidence="1">
    <location>
        <position position="51"/>
    </location>
    <ligand>
        <name>pyruvate</name>
        <dbReference type="ChEBI" id="CHEBI:15361"/>
    </ligand>
</feature>
<feature type="binding site" evidence="1">
    <location>
        <position position="209"/>
    </location>
    <ligand>
        <name>pyruvate</name>
        <dbReference type="ChEBI" id="CHEBI:15361"/>
    </ligand>
</feature>
<feature type="site" description="Part of a proton relay during catalysis" evidence="1">
    <location>
        <position position="50"/>
    </location>
</feature>
<feature type="site" description="Part of a proton relay during catalysis" evidence="1">
    <location>
        <position position="114"/>
    </location>
</feature>
<protein>
    <recommendedName>
        <fullName evidence="1">4-hydroxy-tetrahydrodipicolinate synthase</fullName>
        <shortName evidence="1">HTPA synthase</shortName>
        <ecNumber evidence="1">4.3.3.7</ecNumber>
    </recommendedName>
</protein>
<reference key="1">
    <citation type="journal article" date="2010" name="Genome Biol.">
        <title>Structure and dynamics of the pan-genome of Streptococcus pneumoniae and closely related species.</title>
        <authorList>
            <person name="Donati C."/>
            <person name="Hiller N.L."/>
            <person name="Tettelin H."/>
            <person name="Muzzi A."/>
            <person name="Croucher N.J."/>
            <person name="Angiuoli S.V."/>
            <person name="Oggioni M."/>
            <person name="Dunning Hotopp J.C."/>
            <person name="Hu F.Z."/>
            <person name="Riley D.R."/>
            <person name="Covacci A."/>
            <person name="Mitchell T.J."/>
            <person name="Bentley S.D."/>
            <person name="Kilian M."/>
            <person name="Ehrlich G.D."/>
            <person name="Rappuoli R."/>
            <person name="Moxon E.R."/>
            <person name="Masignani V."/>
        </authorList>
    </citation>
    <scope>NUCLEOTIDE SEQUENCE [LARGE SCALE GENOMIC DNA]</scope>
    <source>
        <strain>Taiwan19F-14</strain>
    </source>
</reference>
<gene>
    <name evidence="1" type="primary">dapA</name>
    <name type="ordered locus">SPT_1068</name>
</gene>
<comment type="function">
    <text evidence="1">Catalyzes the condensation of (S)-aspartate-beta-semialdehyde [(S)-ASA] and pyruvate to 4-hydroxy-tetrahydrodipicolinate (HTPA).</text>
</comment>
<comment type="catalytic activity">
    <reaction evidence="1">
        <text>L-aspartate 4-semialdehyde + pyruvate = (2S,4S)-4-hydroxy-2,3,4,5-tetrahydrodipicolinate + H2O + H(+)</text>
        <dbReference type="Rhea" id="RHEA:34171"/>
        <dbReference type="ChEBI" id="CHEBI:15361"/>
        <dbReference type="ChEBI" id="CHEBI:15377"/>
        <dbReference type="ChEBI" id="CHEBI:15378"/>
        <dbReference type="ChEBI" id="CHEBI:67139"/>
        <dbReference type="ChEBI" id="CHEBI:537519"/>
        <dbReference type="EC" id="4.3.3.7"/>
    </reaction>
</comment>
<comment type="pathway">
    <text evidence="1">Amino-acid biosynthesis; L-lysine biosynthesis via DAP pathway; (S)-tetrahydrodipicolinate from L-aspartate: step 3/4.</text>
</comment>
<comment type="subunit">
    <text evidence="1">Homotetramer; dimer of dimers.</text>
</comment>
<comment type="subcellular location">
    <subcellularLocation>
        <location evidence="1">Cytoplasm</location>
    </subcellularLocation>
</comment>
<comment type="similarity">
    <text evidence="1">Belongs to the DapA family.</text>
</comment>
<comment type="caution">
    <text evidence="2">Was originally thought to be a dihydrodipicolinate synthase (DHDPS), catalyzing the condensation of (S)-aspartate-beta-semialdehyde [(S)-ASA] and pyruvate to dihydrodipicolinate (DHDP). However, it was shown in E.coli that the product of the enzymatic reaction is not dihydrodipicolinate but in fact (4S)-4-hydroxy-2,3,4,5-tetrahydro-(2S)-dipicolinic acid (HTPA), and that the consecutive dehydration reaction leading to DHDP is not spontaneous but catalyzed by DapB.</text>
</comment>
<sequence length="311" mass="33910">MSYQDLKECKIITAFITPFHEDGSINFDAIPALIEHLLAHHTDGILLAGTTAESPTLTHDEELELFAAVQKVVNGRVPLIAGVGTNDTRDSIEFVKEVAEFGGFAAGLAIVPYYNKPSQEGMYQHFKAIADASDLPIIIYNIPGRVVVELTPETMLRLADYPNIIGVKECTSLANMAYLIEHKPEEFLIYTGEDGDAFHAMNLGADGVISVASHTNGDEMHEMFTAIAESDMKKAAAIQRKFIPKVNALFSYPSPAPVKAVLNYMGFEAGPTRLPLIPAPEEDAKRIIKVVVDGDYEATKATVTGVLRPDY</sequence>